<name>SCAF_PYRFU</name>
<comment type="function">
    <text evidence="1">Functions as a scaffold to connect the acetoacetyl-CoA thiolase and HMG-CoA synthase (HMGCS) dimers in the channeling thiolase/HMGCS complex, which allows for efficient coupling of the endergonic thiolase reaction with the exergonic HMGCS reaction.</text>
</comment>
<comment type="subunit">
    <text evidence="1">Interacts with acetoacetyl-CoA thiolase and HMG-CoA synthase (HMGCS) that catalyzes the first and second step in the mevalonate pathway, respectively.</text>
</comment>
<comment type="similarity">
    <text evidence="2">Belongs to the scaffold protein DUF35 family.</text>
</comment>
<dbReference type="EMBL" id="X85250">
    <property type="protein sequence ID" value="CAA59497.1"/>
    <property type="molecule type" value="Genomic_DNA"/>
</dbReference>
<dbReference type="EMBL" id="AE009950">
    <property type="protein sequence ID" value="AAL81098.1"/>
    <property type="molecule type" value="Genomic_DNA"/>
</dbReference>
<dbReference type="PIR" id="T45080">
    <property type="entry name" value="T45080"/>
</dbReference>
<dbReference type="RefSeq" id="WP_011012111.1">
    <property type="nucleotide sequence ID" value="NZ_CP023154.1"/>
</dbReference>
<dbReference type="SMR" id="Q51796"/>
<dbReference type="STRING" id="186497.PF0974"/>
<dbReference type="PaxDb" id="186497-PF0974"/>
<dbReference type="KEGG" id="pfu:PF0974"/>
<dbReference type="PATRIC" id="fig|186497.12.peg.1033"/>
<dbReference type="eggNOG" id="arCOG01285">
    <property type="taxonomic scope" value="Archaea"/>
</dbReference>
<dbReference type="HOGENOM" id="CLU_119412_2_2_2"/>
<dbReference type="OrthoDB" id="9573at2157"/>
<dbReference type="PhylomeDB" id="Q51796"/>
<dbReference type="Proteomes" id="UP000001013">
    <property type="component" value="Chromosome"/>
</dbReference>
<dbReference type="GO" id="GO:0046872">
    <property type="term" value="F:metal ion binding"/>
    <property type="evidence" value="ECO:0007669"/>
    <property type="project" value="UniProtKB-KW"/>
</dbReference>
<dbReference type="Gene3D" id="6.10.30.10">
    <property type="match status" value="1"/>
</dbReference>
<dbReference type="InterPro" id="IPR002878">
    <property type="entry name" value="ChsH2_C"/>
</dbReference>
<dbReference type="InterPro" id="IPR022002">
    <property type="entry name" value="ChsH2_Znr"/>
</dbReference>
<dbReference type="InterPro" id="IPR012340">
    <property type="entry name" value="NA-bd_OB-fold"/>
</dbReference>
<dbReference type="InterPro" id="IPR052513">
    <property type="entry name" value="Thioester_dehydratase-like"/>
</dbReference>
<dbReference type="PANTHER" id="PTHR34075">
    <property type="entry name" value="BLR3430 PROTEIN"/>
    <property type="match status" value="1"/>
</dbReference>
<dbReference type="PANTHER" id="PTHR34075:SF5">
    <property type="entry name" value="BLR3430 PROTEIN"/>
    <property type="match status" value="1"/>
</dbReference>
<dbReference type="Pfam" id="PF01796">
    <property type="entry name" value="OB_ChsH2_C"/>
    <property type="match status" value="1"/>
</dbReference>
<dbReference type="Pfam" id="PF12172">
    <property type="entry name" value="zf-ChsH2"/>
    <property type="match status" value="1"/>
</dbReference>
<dbReference type="SUPFAM" id="SSF50249">
    <property type="entry name" value="Nucleic acid-binding proteins"/>
    <property type="match status" value="1"/>
</dbReference>
<sequence>MGKPMQVSRYWRHFREKYRLIGGKCENGHLLFPKRPICPICGSRNIEEFQFSGKGKVITWTIVRNPPSGFEYYKPYPLALVQLEEGPVVLAQLTDVEPEEIKEGMEVEMVTRKIREFDEDGLILYGYKFRPIIKSE</sequence>
<organism>
    <name type="scientific">Pyrococcus furiosus (strain ATCC 43587 / DSM 3638 / JCM 8422 / Vc1)</name>
    <dbReference type="NCBI Taxonomy" id="186497"/>
    <lineage>
        <taxon>Archaea</taxon>
        <taxon>Methanobacteriati</taxon>
        <taxon>Methanobacteriota</taxon>
        <taxon>Thermococci</taxon>
        <taxon>Thermococcales</taxon>
        <taxon>Thermococcaceae</taxon>
        <taxon>Pyrococcus</taxon>
    </lineage>
</organism>
<gene>
    <name evidence="3" type="primary">acaC</name>
    <name type="ordered locus">PF0974</name>
</gene>
<accession>Q51796</accession>
<evidence type="ECO:0000250" key="1">
    <source>
        <dbReference type="UniProtKB" id="A0A384E139"/>
    </source>
</evidence>
<evidence type="ECO:0000305" key="2"/>
<evidence type="ECO:0000312" key="3">
    <source>
        <dbReference type="EMBL" id="CAA59497.1"/>
    </source>
</evidence>
<protein>
    <recommendedName>
        <fullName evidence="2">DUF35 domain-containing scaffold protein</fullName>
    </recommendedName>
</protein>
<keyword id="KW-0479">Metal-binding</keyword>
<keyword id="KW-1185">Reference proteome</keyword>
<keyword id="KW-0862">Zinc</keyword>
<feature type="chain" id="PRO_0000064433" description="DUF35 domain-containing scaffold protein">
    <location>
        <begin position="1"/>
        <end position="136"/>
    </location>
</feature>
<feature type="binding site" evidence="1">
    <location>
        <position position="25"/>
    </location>
    <ligand>
        <name>Zn(2+)</name>
        <dbReference type="ChEBI" id="CHEBI:29105"/>
    </ligand>
</feature>
<feature type="binding site" evidence="1">
    <location>
        <position position="38"/>
    </location>
    <ligand>
        <name>Zn(2+)</name>
        <dbReference type="ChEBI" id="CHEBI:29105"/>
    </ligand>
</feature>
<feature type="binding site" evidence="1">
    <location>
        <position position="41"/>
    </location>
    <ligand>
        <name>Zn(2+)</name>
        <dbReference type="ChEBI" id="CHEBI:29105"/>
    </ligand>
</feature>
<reference key="1">
    <citation type="journal article" date="1996" name="J. Bacteriol.">
        <title>Molecular and phylogenetic characterization of pyruvate and 2-ketoisovalerate ferredoxin oxidoreductases from Pyrococcus furiosus and pyruvate ferredoxin oxidoreductase from Thermotoga maritima.</title>
        <authorList>
            <person name="Kletzin A."/>
            <person name="Adams M.W.W."/>
        </authorList>
    </citation>
    <scope>NUCLEOTIDE SEQUENCE [GENOMIC DNA]</scope>
    <source>
        <strain>ATCC 43587 / DSM 3638 / JCM 8422 / Vc1</strain>
    </source>
</reference>
<reference key="2">
    <citation type="journal article" date="1999" name="Genetics">
        <title>Divergence of the hyperthermophilic archaea Pyrococcus furiosus and P. horikoshii inferred from complete genomic sequences.</title>
        <authorList>
            <person name="Maeder D.L."/>
            <person name="Weiss R.B."/>
            <person name="Dunn D.M."/>
            <person name="Cherry J.L."/>
            <person name="Gonzalez J.M."/>
            <person name="DiRuggiero J."/>
            <person name="Robb F.T."/>
        </authorList>
    </citation>
    <scope>NUCLEOTIDE SEQUENCE [LARGE SCALE GENOMIC DNA]</scope>
    <source>
        <strain>ATCC 43587 / DSM 3638 / JCM 8422 / Vc1</strain>
    </source>
</reference>
<proteinExistence type="inferred from homology"/>